<accession>Q9QAZ7</accession>
<reference key="1">
    <citation type="journal article" date="1999" name="J. Gen. Virol.">
        <title>Sequence of the non-structural protein gene encoded by RNA1 of striped jack nervous necrosis virus.</title>
        <authorList>
            <person name="Nagai T."/>
            <person name="Nishizawa T."/>
        </authorList>
    </citation>
    <scope>NUCLEOTIDE SEQUENCE [GENOMIC RNA]</scope>
</reference>
<reference key="2">
    <citation type="journal article" date="2001" name="J. Gen. Virol.">
        <title>Establishment of an infectious RNA transcription system for striped jack nervous necrosis virus, the type species of the betanodaviruses.</title>
        <authorList>
            <person name="Iwamoto T."/>
            <person name="Mise K."/>
            <person name="Mori K."/>
            <person name="Arimoto M."/>
            <person name="Nakai T."/>
            <person name="Okuno T."/>
        </authorList>
    </citation>
    <scope>NUCLEOTIDE SEQUENCE [GENOMIC RNA]</scope>
</reference>
<name>B_SJNNV</name>
<feature type="chain" id="PRO_0000402396" description="Protein B">
    <location>
        <begin position="1"/>
        <end position="75"/>
    </location>
</feature>
<protein>
    <recommendedName>
        <fullName>Protein B</fullName>
    </recommendedName>
</protein>
<organismHost>
    <name type="scientific">Dicentrarchus labrax</name>
    <name type="common">European seabass</name>
    <name type="synonym">Morone labrax</name>
    <dbReference type="NCBI Taxonomy" id="13489"/>
</organismHost>
<organismHost>
    <name type="scientific">Epinephelus akaara</name>
    <name type="common">Hong Kong grouper</name>
    <name type="synonym">Serranus akaara</name>
    <dbReference type="NCBI Taxonomy" id="215347"/>
</organismHost>
<organismHost>
    <name type="scientific">Hippoglossus hippoglossus</name>
    <name type="common">Atlantic halibut</name>
    <name type="synonym">Pleuronectes hippoglossus</name>
    <dbReference type="NCBI Taxonomy" id="8267"/>
</organismHost>
<organismHost>
    <name type="scientific">Lates calcarifer</name>
    <name type="common">Barramundi</name>
    <name type="synonym">Holocentrus calcarifer</name>
    <dbReference type="NCBI Taxonomy" id="8187"/>
</organismHost>
<organismHost>
    <name type="scientific">Oplegnathus fasciatus</name>
    <name type="common">Barred knifejaw</name>
    <name type="synonym">Scaradon fasciatus</name>
    <dbReference type="NCBI Taxonomy" id="163134"/>
</organismHost>
<keyword id="KW-1185">Reference proteome</keyword>
<proteinExistence type="predicted"/>
<organism>
    <name type="scientific">Striped jack nervous necrosis virus</name>
    <name type="common">SjNNV</name>
    <dbReference type="NCBI Taxonomy" id="35297"/>
    <lineage>
        <taxon>Viruses</taxon>
        <taxon>Riboviria</taxon>
        <taxon>Orthornavirae</taxon>
        <taxon>Kitrinoviricota</taxon>
        <taxon>Magsaviricetes</taxon>
        <taxon>Nodamuvirales</taxon>
        <taxon>Nodaviridae</taxon>
        <taxon>Betanodavirus</taxon>
    </lineage>
</organism>
<dbReference type="EMBL" id="AB025018">
    <property type="protein sequence ID" value="BAA84211.1"/>
    <property type="molecule type" value="Genomic_RNA"/>
</dbReference>
<dbReference type="EMBL" id="AB056571">
    <property type="protein sequence ID" value="BAB64330.1"/>
    <property type="molecule type" value="Genomic_RNA"/>
</dbReference>
<dbReference type="RefSeq" id="NP_599248.1">
    <property type="nucleotide sequence ID" value="NC_003448.1"/>
</dbReference>
<dbReference type="GeneID" id="991145"/>
<dbReference type="KEGG" id="vg:991145"/>
<dbReference type="OrthoDB" id="24771at10239"/>
<dbReference type="Proteomes" id="UP000000414">
    <property type="component" value="Genome"/>
</dbReference>
<sequence length="75" mass="8338">MEQVQQAIDQHLVELEQLFKMLMDVRVALGGVTVVQVNEMRTFVISASAAAQRLRALARRYPAPLAVAAEPMETE</sequence>